<accession>P0CF26</accession>
<accession>Q2MCE8</accession>
<accession>Q47302</accession>
<accession>Q47691</accession>
<dbReference type="EMBL" id="L20943">
    <property type="protein sequence ID" value="AAA69643.1"/>
    <property type="molecule type" value="Unassigned_DNA"/>
</dbReference>
<dbReference type="EMBL" id="U70214">
    <property type="protein sequence ID" value="AAB08695.1"/>
    <property type="molecule type" value="Genomic_DNA"/>
</dbReference>
<dbReference type="EMBL" id="U00096">
    <property type="protein sequence ID" value="AAC73367.1"/>
    <property type="molecule type" value="Genomic_DNA"/>
</dbReference>
<dbReference type="EMBL" id="AP009048">
    <property type="protein sequence ID" value="BAE76050.1"/>
    <property type="molecule type" value="Genomic_DNA"/>
</dbReference>
<dbReference type="RefSeq" id="NP_414798.1">
    <property type="nucleotide sequence ID" value="NC_000913.3"/>
</dbReference>
<dbReference type="FunCoup" id="P0CF26">
    <property type="interactions" value="47"/>
</dbReference>
<dbReference type="STRING" id="511145.b0264"/>
<dbReference type="PaxDb" id="511145-b0264"/>
<dbReference type="EnsemblBacteria" id="AAC73367">
    <property type="protein sequence ID" value="AAC73367"/>
    <property type="gene ID" value="b0264"/>
</dbReference>
<dbReference type="GeneID" id="947698"/>
<dbReference type="KEGG" id="ecj:JW0256"/>
<dbReference type="KEGG" id="eco:b0264"/>
<dbReference type="KEGG" id="eco:b0274"/>
<dbReference type="KEGG" id="ecoc:C3026_01275"/>
<dbReference type="KEGG" id="ecoc:C3026_01330"/>
<dbReference type="EchoBASE" id="EB4705"/>
<dbReference type="eggNOG" id="COG1662">
    <property type="taxonomic scope" value="Bacteria"/>
</dbReference>
<dbReference type="HOGENOM" id="CLU_076276_2_0_6"/>
<dbReference type="InParanoid" id="P0CF26"/>
<dbReference type="OMA" id="RTICYSK"/>
<dbReference type="PhylomeDB" id="P0CF26"/>
<dbReference type="BioCyc" id="EcoCyc:G6138-MONOMER"/>
<dbReference type="PRO" id="PR:P0CF26"/>
<dbReference type="Proteomes" id="UP000000625">
    <property type="component" value="Chromosome"/>
</dbReference>
<dbReference type="GO" id="GO:0003677">
    <property type="term" value="F:DNA binding"/>
    <property type="evidence" value="ECO:0007669"/>
    <property type="project" value="InterPro"/>
</dbReference>
<dbReference type="GO" id="GO:0004803">
    <property type="term" value="F:transposase activity"/>
    <property type="evidence" value="ECO:0007669"/>
    <property type="project" value="InterPro"/>
</dbReference>
<dbReference type="GO" id="GO:0006313">
    <property type="term" value="P:DNA transposition"/>
    <property type="evidence" value="ECO:0000315"/>
    <property type="project" value="EcoCyc"/>
</dbReference>
<dbReference type="InterPro" id="IPR005063">
    <property type="entry name" value="Transposase_27"/>
</dbReference>
<dbReference type="InterPro" id="IPR051354">
    <property type="entry name" value="Transposase_27_IS1"/>
</dbReference>
<dbReference type="NCBIfam" id="NF033558">
    <property type="entry name" value="transpos_IS1"/>
    <property type="match status" value="1"/>
</dbReference>
<dbReference type="PANTHER" id="PTHR33293">
    <property type="entry name" value="INSERTION ELEMENT IS1 1 PROTEIN INSB-RELATED"/>
    <property type="match status" value="1"/>
</dbReference>
<dbReference type="PANTHER" id="PTHR33293:SF1">
    <property type="entry name" value="INSERTION ELEMENT IS1 1 PROTEIN INSB-RELATED"/>
    <property type="match status" value="1"/>
</dbReference>
<dbReference type="Pfam" id="PF03400">
    <property type="entry name" value="DDE_Tnp_IS1"/>
    <property type="match status" value="1"/>
</dbReference>
<protein>
    <recommendedName>
        <fullName>Insertion element IS1 2 protein InsB</fullName>
    </recommendedName>
    <alternativeName>
        <fullName>IS1b</fullName>
    </alternativeName>
</protein>
<gene>
    <name type="primary">insB2</name>
    <name type="ordered locus">b0264</name>
    <name type="ordered locus">JW0256</name>
</gene>
<keyword id="KW-0233">DNA recombination</keyword>
<keyword id="KW-1185">Reference proteome</keyword>
<keyword id="KW-0814">Transposable element</keyword>
<keyword id="KW-0815">Transposition</keyword>
<evidence type="ECO:0000305" key="1"/>
<proteinExistence type="inferred from homology"/>
<reference key="1">
    <citation type="journal article" date="1991" name="Gene">
        <title>Four types of IS1 with differences in nucleotide sequence reside in the Escherichia coli K-12 chromosome.</title>
        <authorList>
            <person name="Umeda M."/>
            <person name="Ohtsubo E."/>
        </authorList>
    </citation>
    <scope>NUCLEOTIDE SEQUENCE [GENOMIC DNA]</scope>
    <source>
        <strain>K12 / W3110 / ATCC 27325 / DSM 5911</strain>
    </source>
</reference>
<reference key="2">
    <citation type="journal article" date="1994" name="J. Bacteriol.">
        <title>The delta (argF-lacZ)205(U169) deletion greatly enhances resistance to hydrogen peroxide in stationary-phase Escherichia coli.</title>
        <authorList>
            <person name="Volkert M.R."/>
            <person name="Loewen P.C."/>
            <person name="Switala J."/>
            <person name="Crowley D."/>
            <person name="Conley M."/>
        </authorList>
    </citation>
    <scope>NUCLEOTIDE SEQUENCE [GENOMIC DNA]</scope>
</reference>
<reference key="3">
    <citation type="submission" date="1997-01" db="EMBL/GenBank/DDBJ databases">
        <title>Sequence of minutes 4-25 of Escherichia coli.</title>
        <authorList>
            <person name="Chung E."/>
            <person name="Allen E."/>
            <person name="Araujo R."/>
            <person name="Aparicio A.M."/>
            <person name="Davis K."/>
            <person name="Duncan M."/>
            <person name="Federspiel N."/>
            <person name="Hyman R."/>
            <person name="Kalman S."/>
            <person name="Komp C."/>
            <person name="Kurdi O."/>
            <person name="Lew H."/>
            <person name="Lin D."/>
            <person name="Namath A."/>
            <person name="Oefner P."/>
            <person name="Roberts D."/>
            <person name="Schramm S."/>
            <person name="Davis R.W."/>
        </authorList>
    </citation>
    <scope>NUCLEOTIDE SEQUENCE [LARGE SCALE GENOMIC DNA]</scope>
    <source>
        <strain>K12 / MG1655 / ATCC 47076</strain>
    </source>
</reference>
<reference key="4">
    <citation type="journal article" date="1997" name="Science">
        <title>The complete genome sequence of Escherichia coli K-12.</title>
        <authorList>
            <person name="Blattner F.R."/>
            <person name="Plunkett G. III"/>
            <person name="Bloch C.A."/>
            <person name="Perna N.T."/>
            <person name="Burland V."/>
            <person name="Riley M."/>
            <person name="Collado-Vides J."/>
            <person name="Glasner J.D."/>
            <person name="Rode C.K."/>
            <person name="Mayhew G.F."/>
            <person name="Gregor J."/>
            <person name="Davis N.W."/>
            <person name="Kirkpatrick H.A."/>
            <person name="Goeden M.A."/>
            <person name="Rose D.J."/>
            <person name="Mau B."/>
            <person name="Shao Y."/>
        </authorList>
    </citation>
    <scope>NUCLEOTIDE SEQUENCE [LARGE SCALE GENOMIC DNA]</scope>
    <source>
        <strain>K12 / MG1655 / ATCC 47076</strain>
    </source>
</reference>
<reference key="5">
    <citation type="journal article" date="2006" name="Mol. Syst. Biol.">
        <title>Highly accurate genome sequences of Escherichia coli K-12 strains MG1655 and W3110.</title>
        <authorList>
            <person name="Hayashi K."/>
            <person name="Morooka N."/>
            <person name="Yamamoto Y."/>
            <person name="Fujita K."/>
            <person name="Isono K."/>
            <person name="Choi S."/>
            <person name="Ohtsubo E."/>
            <person name="Baba T."/>
            <person name="Wanner B.L."/>
            <person name="Mori H."/>
            <person name="Horiuchi T."/>
        </authorList>
    </citation>
    <scope>NUCLEOTIDE SEQUENCE [LARGE SCALE GENOMIC DNA]</scope>
    <source>
        <strain>K12 / W3110 / ATCC 27325 / DSM 5911</strain>
    </source>
</reference>
<name>INSB2_ECOLI</name>
<sequence>MPGNRPHYGRWPQHDFPPFKKLRPQSVTSRIQPGSDVIVCAEMDEQWGYVGAKSRQRWLFYAYDRLRKTVVAHVFGERTMATLGRLMSLLSPFDVVIWMTDGWPLYESRLKGKLHVISKRYTQRIERHNLNLRQHLARLGRKSLSFSKSVEQHDKVIGHYLNIKHYQ</sequence>
<feature type="chain" id="PRO_0000075402" description="Insertion element IS1 2 protein InsB">
    <location>
        <begin position="1"/>
        <end position="167"/>
    </location>
</feature>
<comment type="function">
    <text>Absolutely required for transposition of IS1.</text>
</comment>
<comment type="similarity">
    <text evidence="1">Belongs to the transposase 27 family.</text>
</comment>
<organism>
    <name type="scientific">Escherichia coli (strain K12)</name>
    <dbReference type="NCBI Taxonomy" id="83333"/>
    <lineage>
        <taxon>Bacteria</taxon>
        <taxon>Pseudomonadati</taxon>
        <taxon>Pseudomonadota</taxon>
        <taxon>Gammaproteobacteria</taxon>
        <taxon>Enterobacterales</taxon>
        <taxon>Enterobacteriaceae</taxon>
        <taxon>Escherichia</taxon>
    </lineage>
</organism>